<keyword id="KW-0233">DNA recombination</keyword>
<keyword id="KW-0238">DNA-binding</keyword>
<keyword id="KW-0804">Transcription</keyword>
<keyword id="KW-0805">Transcription regulation</keyword>
<keyword id="KW-0810">Translation regulation</keyword>
<evidence type="ECO:0000255" key="1">
    <source>
        <dbReference type="HAMAP-Rule" id="MF_00380"/>
    </source>
</evidence>
<evidence type="ECO:0000256" key="2">
    <source>
        <dbReference type="SAM" id="MobiDB-lite"/>
    </source>
</evidence>
<gene>
    <name evidence="1" type="primary">ihfA</name>
    <name evidence="1" type="synonym">himA</name>
    <name type="ordered locus">BPP2600</name>
</gene>
<organism>
    <name type="scientific">Bordetella parapertussis (strain 12822 / ATCC BAA-587 / NCTC 13253)</name>
    <dbReference type="NCBI Taxonomy" id="257311"/>
    <lineage>
        <taxon>Bacteria</taxon>
        <taxon>Pseudomonadati</taxon>
        <taxon>Pseudomonadota</taxon>
        <taxon>Betaproteobacteria</taxon>
        <taxon>Burkholderiales</taxon>
        <taxon>Alcaligenaceae</taxon>
        <taxon>Bordetella</taxon>
    </lineage>
</organism>
<dbReference type="EMBL" id="BX640431">
    <property type="protein sequence ID" value="CAE37892.1"/>
    <property type="molecule type" value="Genomic_DNA"/>
</dbReference>
<dbReference type="RefSeq" id="WP_003812826.1">
    <property type="nucleotide sequence ID" value="NC_002928.3"/>
</dbReference>
<dbReference type="SMR" id="Q7W7C5"/>
<dbReference type="KEGG" id="bpa:BPP2600"/>
<dbReference type="HOGENOM" id="CLU_105066_1_0_4"/>
<dbReference type="Proteomes" id="UP000001421">
    <property type="component" value="Chromosome"/>
</dbReference>
<dbReference type="GO" id="GO:0005829">
    <property type="term" value="C:cytosol"/>
    <property type="evidence" value="ECO:0007669"/>
    <property type="project" value="TreeGrafter"/>
</dbReference>
<dbReference type="GO" id="GO:0003677">
    <property type="term" value="F:DNA binding"/>
    <property type="evidence" value="ECO:0007669"/>
    <property type="project" value="UniProtKB-UniRule"/>
</dbReference>
<dbReference type="GO" id="GO:0030527">
    <property type="term" value="F:structural constituent of chromatin"/>
    <property type="evidence" value="ECO:0007669"/>
    <property type="project" value="InterPro"/>
</dbReference>
<dbReference type="GO" id="GO:0006310">
    <property type="term" value="P:DNA recombination"/>
    <property type="evidence" value="ECO:0007669"/>
    <property type="project" value="UniProtKB-UniRule"/>
</dbReference>
<dbReference type="GO" id="GO:0009893">
    <property type="term" value="P:positive regulation of metabolic process"/>
    <property type="evidence" value="ECO:0007669"/>
    <property type="project" value="UniProtKB-ARBA"/>
</dbReference>
<dbReference type="GO" id="GO:0006355">
    <property type="term" value="P:regulation of DNA-templated transcription"/>
    <property type="evidence" value="ECO:0007669"/>
    <property type="project" value="UniProtKB-UniRule"/>
</dbReference>
<dbReference type="GO" id="GO:0006417">
    <property type="term" value="P:regulation of translation"/>
    <property type="evidence" value="ECO:0007669"/>
    <property type="project" value="UniProtKB-UniRule"/>
</dbReference>
<dbReference type="CDD" id="cd13835">
    <property type="entry name" value="IHF_A"/>
    <property type="match status" value="1"/>
</dbReference>
<dbReference type="FunFam" id="4.10.520.10:FF:000002">
    <property type="entry name" value="Integration host factor subunit alpha"/>
    <property type="match status" value="1"/>
</dbReference>
<dbReference type="Gene3D" id="4.10.520.10">
    <property type="entry name" value="IHF-like DNA-binding proteins"/>
    <property type="match status" value="1"/>
</dbReference>
<dbReference type="HAMAP" id="MF_00380">
    <property type="entry name" value="IHF_alpha"/>
    <property type="match status" value="1"/>
</dbReference>
<dbReference type="InterPro" id="IPR000119">
    <property type="entry name" value="Hist_DNA-bd"/>
</dbReference>
<dbReference type="InterPro" id="IPR020816">
    <property type="entry name" value="Histone-like_DNA-bd_CS"/>
</dbReference>
<dbReference type="InterPro" id="IPR010992">
    <property type="entry name" value="IHF-like_DNA-bd_dom_sf"/>
</dbReference>
<dbReference type="InterPro" id="IPR005684">
    <property type="entry name" value="IHF_alpha"/>
</dbReference>
<dbReference type="NCBIfam" id="TIGR00987">
    <property type="entry name" value="himA"/>
    <property type="match status" value="1"/>
</dbReference>
<dbReference type="NCBIfam" id="NF001401">
    <property type="entry name" value="PRK00285.1"/>
    <property type="match status" value="1"/>
</dbReference>
<dbReference type="PANTHER" id="PTHR33175">
    <property type="entry name" value="DNA-BINDING PROTEIN HU"/>
    <property type="match status" value="1"/>
</dbReference>
<dbReference type="PANTHER" id="PTHR33175:SF2">
    <property type="entry name" value="INTEGRATION HOST FACTOR SUBUNIT ALPHA"/>
    <property type="match status" value="1"/>
</dbReference>
<dbReference type="Pfam" id="PF00216">
    <property type="entry name" value="Bac_DNA_binding"/>
    <property type="match status" value="1"/>
</dbReference>
<dbReference type="PRINTS" id="PR01727">
    <property type="entry name" value="DNABINDINGHU"/>
</dbReference>
<dbReference type="SMART" id="SM00411">
    <property type="entry name" value="BHL"/>
    <property type="match status" value="1"/>
</dbReference>
<dbReference type="SUPFAM" id="SSF47729">
    <property type="entry name" value="IHF-like DNA-binding proteins"/>
    <property type="match status" value="1"/>
</dbReference>
<dbReference type="PROSITE" id="PS00045">
    <property type="entry name" value="HISTONE_LIKE"/>
    <property type="match status" value="1"/>
</dbReference>
<protein>
    <recommendedName>
        <fullName evidence="1">Integration host factor subunit alpha</fullName>
        <shortName evidence="1">IHF-alpha</shortName>
    </recommendedName>
</protein>
<reference key="1">
    <citation type="journal article" date="2003" name="Nat. Genet.">
        <title>Comparative analysis of the genome sequences of Bordetella pertussis, Bordetella parapertussis and Bordetella bronchiseptica.</title>
        <authorList>
            <person name="Parkhill J."/>
            <person name="Sebaihia M."/>
            <person name="Preston A."/>
            <person name="Murphy L.D."/>
            <person name="Thomson N.R."/>
            <person name="Harris D.E."/>
            <person name="Holden M.T.G."/>
            <person name="Churcher C.M."/>
            <person name="Bentley S.D."/>
            <person name="Mungall K.L."/>
            <person name="Cerdeno-Tarraga A.-M."/>
            <person name="Temple L."/>
            <person name="James K.D."/>
            <person name="Harris B."/>
            <person name="Quail M.A."/>
            <person name="Achtman M."/>
            <person name="Atkin R."/>
            <person name="Baker S."/>
            <person name="Basham D."/>
            <person name="Bason N."/>
            <person name="Cherevach I."/>
            <person name="Chillingworth T."/>
            <person name="Collins M."/>
            <person name="Cronin A."/>
            <person name="Davis P."/>
            <person name="Doggett J."/>
            <person name="Feltwell T."/>
            <person name="Goble A."/>
            <person name="Hamlin N."/>
            <person name="Hauser H."/>
            <person name="Holroyd S."/>
            <person name="Jagels K."/>
            <person name="Leather S."/>
            <person name="Moule S."/>
            <person name="Norberczak H."/>
            <person name="O'Neil S."/>
            <person name="Ormond D."/>
            <person name="Price C."/>
            <person name="Rabbinowitsch E."/>
            <person name="Rutter S."/>
            <person name="Sanders M."/>
            <person name="Saunders D."/>
            <person name="Seeger K."/>
            <person name="Sharp S."/>
            <person name="Simmonds M."/>
            <person name="Skelton J."/>
            <person name="Squares R."/>
            <person name="Squares S."/>
            <person name="Stevens K."/>
            <person name="Unwin L."/>
            <person name="Whitehead S."/>
            <person name="Barrell B.G."/>
            <person name="Maskell D.J."/>
        </authorList>
    </citation>
    <scope>NUCLEOTIDE SEQUENCE [LARGE SCALE GENOMIC DNA]</scope>
    <source>
        <strain>12822 / ATCC BAA-587 / NCTC 13253</strain>
    </source>
</reference>
<proteinExistence type="inferred from homology"/>
<comment type="function">
    <text evidence="1">This protein is one of the two subunits of integration host factor, a specific DNA-binding protein that functions in genetic recombination as well as in transcriptional and translational control.</text>
</comment>
<comment type="subunit">
    <text evidence="1">Heterodimer of an alpha and a beta chain.</text>
</comment>
<comment type="similarity">
    <text evidence="1">Belongs to the bacterial histone-like protein family.</text>
</comment>
<sequence length="113" mass="12431">MGTTMLAEPRTLTKAELAELLFERVGLNKREAKDIVDTFFEEIRDALARGDSVKLSGFGNFQVRDKPPRPGRNPKTGETIPIAARRVVTFHASQKLKSVVEQPSSPPDPASAE</sequence>
<feature type="chain" id="PRO_0000277716" description="Integration host factor subunit alpha">
    <location>
        <begin position="1"/>
        <end position="113"/>
    </location>
</feature>
<feature type="region of interest" description="Disordered" evidence="2">
    <location>
        <begin position="59"/>
        <end position="80"/>
    </location>
</feature>
<name>IHFA_BORPA</name>
<accession>Q7W7C5</accession>